<proteinExistence type="evidence at transcript level"/>
<name>VSP6_PROMU</name>
<dbReference type="EC" id="3.4.21.-"/>
<dbReference type="EMBL" id="AF098263">
    <property type="protein sequence ID" value="AAG27254.1"/>
    <property type="molecule type" value="mRNA"/>
</dbReference>
<dbReference type="SMR" id="Q9DG83"/>
<dbReference type="MEROPS" id="S01.340"/>
<dbReference type="GO" id="GO:0005576">
    <property type="term" value="C:extracellular region"/>
    <property type="evidence" value="ECO:0007669"/>
    <property type="project" value="UniProtKB-SubCell"/>
</dbReference>
<dbReference type="GO" id="GO:0030141">
    <property type="term" value="C:secretory granule"/>
    <property type="evidence" value="ECO:0007669"/>
    <property type="project" value="TreeGrafter"/>
</dbReference>
<dbReference type="GO" id="GO:0004252">
    <property type="term" value="F:serine-type endopeptidase activity"/>
    <property type="evidence" value="ECO:0007669"/>
    <property type="project" value="InterPro"/>
</dbReference>
<dbReference type="GO" id="GO:0090729">
    <property type="term" value="F:toxin activity"/>
    <property type="evidence" value="ECO:0007669"/>
    <property type="project" value="UniProtKB-KW"/>
</dbReference>
<dbReference type="GO" id="GO:0006508">
    <property type="term" value="P:proteolysis"/>
    <property type="evidence" value="ECO:0007669"/>
    <property type="project" value="UniProtKB-KW"/>
</dbReference>
<dbReference type="CDD" id="cd00190">
    <property type="entry name" value="Tryp_SPc"/>
    <property type="match status" value="1"/>
</dbReference>
<dbReference type="FunFam" id="2.40.10.10:FF:000158">
    <property type="entry name" value="Thrombin-like enzyme saxthrombin"/>
    <property type="match status" value="1"/>
</dbReference>
<dbReference type="Gene3D" id="2.40.10.10">
    <property type="entry name" value="Trypsin-like serine proteases"/>
    <property type="match status" value="2"/>
</dbReference>
<dbReference type="InterPro" id="IPR009003">
    <property type="entry name" value="Peptidase_S1_PA"/>
</dbReference>
<dbReference type="InterPro" id="IPR043504">
    <property type="entry name" value="Peptidase_S1_PA_chymotrypsin"/>
</dbReference>
<dbReference type="InterPro" id="IPR001314">
    <property type="entry name" value="Peptidase_S1A"/>
</dbReference>
<dbReference type="InterPro" id="IPR001254">
    <property type="entry name" value="Trypsin_dom"/>
</dbReference>
<dbReference type="InterPro" id="IPR018114">
    <property type="entry name" value="TRYPSIN_HIS"/>
</dbReference>
<dbReference type="InterPro" id="IPR033116">
    <property type="entry name" value="TRYPSIN_SER"/>
</dbReference>
<dbReference type="PANTHER" id="PTHR24271:SF47">
    <property type="entry name" value="KALLIKREIN-1"/>
    <property type="match status" value="1"/>
</dbReference>
<dbReference type="PANTHER" id="PTHR24271">
    <property type="entry name" value="KALLIKREIN-RELATED"/>
    <property type="match status" value="1"/>
</dbReference>
<dbReference type="Pfam" id="PF00089">
    <property type="entry name" value="Trypsin"/>
    <property type="match status" value="1"/>
</dbReference>
<dbReference type="PRINTS" id="PR00722">
    <property type="entry name" value="CHYMOTRYPSIN"/>
</dbReference>
<dbReference type="SMART" id="SM00020">
    <property type="entry name" value="Tryp_SPc"/>
    <property type="match status" value="1"/>
</dbReference>
<dbReference type="SUPFAM" id="SSF50494">
    <property type="entry name" value="Trypsin-like serine proteases"/>
    <property type="match status" value="1"/>
</dbReference>
<dbReference type="PROSITE" id="PS50240">
    <property type="entry name" value="TRYPSIN_DOM"/>
    <property type="match status" value="1"/>
</dbReference>
<dbReference type="PROSITE" id="PS00134">
    <property type="entry name" value="TRYPSIN_HIS"/>
    <property type="match status" value="1"/>
</dbReference>
<dbReference type="PROSITE" id="PS00135">
    <property type="entry name" value="TRYPSIN_SER"/>
    <property type="match status" value="1"/>
</dbReference>
<evidence type="ECO:0000250" key="1"/>
<evidence type="ECO:0000250" key="2">
    <source>
        <dbReference type="UniProtKB" id="Q9I8X1"/>
    </source>
</evidence>
<evidence type="ECO:0000255" key="3"/>
<evidence type="ECO:0000255" key="4">
    <source>
        <dbReference type="PROSITE-ProRule" id="PRU00274"/>
    </source>
</evidence>
<sequence>MVLIRVLANLLILQLSYAQRTSELVIGGDECNINEHRFLVALHDALSGRFLCGGTLIHPEWVLTAAHCNTHFIIIYLGAHNQSVEFDYEETRYPEKKYFFPCSKNYTKWDKDIMLIRLYSPVRNSKHIAPISLPSSPPSVGSVCRIMGWGAITSPNETFPDVPHCANINLFNYTVCRAAYPELPATSRTLCAGILEGGIDTCHGDSGGPLICNGQFQGIVQAGGKTCARPRKPAVYTNVFDHLDWIKSIIAGNTAVTCPP</sequence>
<keyword id="KW-1015">Disulfide bond</keyword>
<keyword id="KW-0325">Glycoprotein</keyword>
<keyword id="KW-1199">Hemostasis impairing toxin</keyword>
<keyword id="KW-0378">Hydrolase</keyword>
<keyword id="KW-0645">Protease</keyword>
<keyword id="KW-0964">Secreted</keyword>
<keyword id="KW-0720">Serine protease</keyword>
<keyword id="KW-0732">Signal</keyword>
<keyword id="KW-0800">Toxin</keyword>
<keyword id="KW-0865">Zymogen</keyword>
<protein>
    <recommendedName>
        <fullName>Snake venom serine protease serpentokallikrein-1</fullName>
        <shortName>SVSP</shortName>
        <ecNumber>3.4.21.-</ecNumber>
    </recommendedName>
</protein>
<accession>Q9DG83</accession>
<comment type="function">
    <text evidence="1">Snake venom serine protease that may act in the hemostasis system of the prey.</text>
</comment>
<comment type="subunit">
    <text evidence="1">Monomer.</text>
</comment>
<comment type="subcellular location">
    <subcellularLocation>
        <location>Secreted</location>
    </subcellularLocation>
</comment>
<comment type="tissue specificity">
    <text>Expressed by the venom gland.</text>
</comment>
<comment type="similarity">
    <text evidence="4">Belongs to the peptidase S1 family. Snake venom subfamily.</text>
</comment>
<feature type="signal peptide" evidence="1">
    <location>
        <begin position="1"/>
        <end position="18"/>
    </location>
</feature>
<feature type="propeptide" id="PRO_0000028417" evidence="1">
    <location>
        <begin position="19"/>
        <end position="24"/>
    </location>
</feature>
<feature type="chain" id="PRO_0000028418" description="Snake venom serine protease serpentokallikrein-1">
    <location>
        <begin position="25"/>
        <end position="260"/>
    </location>
</feature>
<feature type="domain" description="Peptidase S1" evidence="4">
    <location>
        <begin position="25"/>
        <end position="251"/>
    </location>
</feature>
<feature type="active site" description="Charge relay system" evidence="2">
    <location>
        <position position="67"/>
    </location>
</feature>
<feature type="active site" description="Charge relay system" evidence="2">
    <location>
        <position position="112"/>
    </location>
</feature>
<feature type="active site" description="Charge relay system" evidence="2">
    <location>
        <position position="206"/>
    </location>
</feature>
<feature type="glycosylation site" description="N-linked (GlcNAc...) asparagine" evidence="3">
    <location>
        <position position="81"/>
    </location>
</feature>
<feature type="glycosylation site" description="N-linked (GlcNAc...) asparagine" evidence="3">
    <location>
        <position position="105"/>
    </location>
</feature>
<feature type="glycosylation site" description="N-linked (GlcNAc...) asparagine" evidence="3">
    <location>
        <position position="156"/>
    </location>
</feature>
<feature type="glycosylation site" description="N-linked (GlcNAc...) asparagine" evidence="3">
    <location>
        <position position="172"/>
    </location>
</feature>
<feature type="disulfide bond" evidence="4">
    <location>
        <begin position="31"/>
        <end position="165"/>
    </location>
</feature>
<feature type="disulfide bond" evidence="4">
    <location>
        <begin position="52"/>
        <end position="68"/>
    </location>
</feature>
<feature type="disulfide bond" evidence="4">
    <location>
        <begin position="102"/>
        <end position="258"/>
    </location>
</feature>
<feature type="disulfide bond" evidence="4">
    <location>
        <begin position="144"/>
        <end position="212"/>
    </location>
</feature>
<feature type="disulfide bond" evidence="4">
    <location>
        <begin position="176"/>
        <end position="191"/>
    </location>
</feature>
<feature type="disulfide bond" evidence="4">
    <location>
        <begin position="202"/>
        <end position="227"/>
    </location>
</feature>
<reference key="1">
    <citation type="submission" date="1998-10" db="EMBL/GenBank/DDBJ databases">
        <title>Serpentokallikreins from Taiwan habu.</title>
        <authorList>
            <person name="Chiou S.-H."/>
            <person name="Hung C.-C."/>
        </authorList>
    </citation>
    <scope>NUCLEOTIDE SEQUENCE [MRNA]</scope>
    <source>
        <tissue>Venom gland</tissue>
    </source>
</reference>
<organism>
    <name type="scientific">Protobothrops mucrosquamatus</name>
    <name type="common">Taiwan habu</name>
    <name type="synonym">Trimeresurus mucrosquamatus</name>
    <dbReference type="NCBI Taxonomy" id="103944"/>
    <lineage>
        <taxon>Eukaryota</taxon>
        <taxon>Metazoa</taxon>
        <taxon>Chordata</taxon>
        <taxon>Craniata</taxon>
        <taxon>Vertebrata</taxon>
        <taxon>Euteleostomi</taxon>
        <taxon>Lepidosauria</taxon>
        <taxon>Squamata</taxon>
        <taxon>Bifurcata</taxon>
        <taxon>Unidentata</taxon>
        <taxon>Episquamata</taxon>
        <taxon>Toxicofera</taxon>
        <taxon>Serpentes</taxon>
        <taxon>Colubroidea</taxon>
        <taxon>Viperidae</taxon>
        <taxon>Crotalinae</taxon>
        <taxon>Protobothrops</taxon>
    </lineage>
</organism>